<sequence>MAKIVEFDDKSRRSLERGINTLADAVRITMGPKGRNVLLEKKYGAPQIVNDGITVAKDIELEDPLENTGAKLIQEVASKTKDIAGDGTTTATVLAQSMIKEGLKNVAAGANPVAVRRGIEKTVSLLVKEIQTVAKPVEGEAIAQVATVSAGGDAEVGRMISEAMDKVTKDGVITVEESKSLSTDLEVVEGMQIDRGYLSPYFVTDQERLVVDFENARILITDKKISSIQDLVPVLEKVARAGQSLLIIAEDIEGEALATLVVNKARGVLNVAAVKAPGFGDRRKAMLQDIAILTGGQLISEEVGLSLEMVDLDMMGIGRKISINKDNTTIVADGGTAEEVKKRIAQIRKQLGESDSDYDKEKLQERIAKLAGGVAVIKVGAATETELKDRKLRIEDALNATKAAVEEGIVPGGGTTLIHLSTKVEELKGSLNNEEEKIGADIVRRALEAPLNQIANNSGVEGSVIVEKVRSTDFSVGYNVITGEYEDLIAAGILDPAMVVRSALQNAGSIAGMVLTTEAVVVEKPEKKGAAPDMDGGMGGMGGMGGMGGMGGMGMPGMGMM</sequence>
<gene>
    <name evidence="1" type="primary">groEL1</name>
    <name evidence="1" type="synonym">groL1</name>
    <name type="ordered locus">Tery_0270</name>
</gene>
<accession>Q119S1</accession>
<reference key="1">
    <citation type="journal article" date="2015" name="Proc. Natl. Acad. Sci. U.S.A.">
        <title>Trichodesmium genome maintains abundant, widespread noncoding DNA in situ, despite oligotrophic lifestyle.</title>
        <authorList>
            <person name="Walworth N."/>
            <person name="Pfreundt U."/>
            <person name="Nelson W.C."/>
            <person name="Mincer T."/>
            <person name="Heidelberg J.F."/>
            <person name="Fu F."/>
            <person name="Waterbury J.B."/>
            <person name="Glavina del Rio T."/>
            <person name="Goodwin L."/>
            <person name="Kyrpides N.C."/>
            <person name="Land M.L."/>
            <person name="Woyke T."/>
            <person name="Hutchins D.A."/>
            <person name="Hess W.R."/>
            <person name="Webb E.A."/>
        </authorList>
    </citation>
    <scope>NUCLEOTIDE SEQUENCE [LARGE SCALE GENOMIC DNA]</scope>
    <source>
        <strain>IMS101</strain>
    </source>
</reference>
<comment type="function">
    <text evidence="1">Together with its co-chaperonin GroES, plays an essential role in assisting protein folding. The GroEL-GroES system forms a nano-cage that allows encapsulation of the non-native substrate proteins and provides a physical environment optimized to promote and accelerate protein folding.</text>
</comment>
<comment type="catalytic activity">
    <reaction evidence="1">
        <text>ATP + H2O + a folded polypeptide = ADP + phosphate + an unfolded polypeptide.</text>
        <dbReference type="EC" id="5.6.1.7"/>
    </reaction>
</comment>
<comment type="subunit">
    <text evidence="1">Forms a cylinder of 14 subunits composed of two heptameric rings stacked back-to-back. Interacts with the co-chaperonin GroES.</text>
</comment>
<comment type="subcellular location">
    <subcellularLocation>
        <location evidence="1">Cytoplasm</location>
    </subcellularLocation>
</comment>
<comment type="similarity">
    <text evidence="1">Belongs to the chaperonin (HSP60) family.</text>
</comment>
<organism>
    <name type="scientific">Trichodesmium erythraeum (strain IMS101)</name>
    <dbReference type="NCBI Taxonomy" id="203124"/>
    <lineage>
        <taxon>Bacteria</taxon>
        <taxon>Bacillati</taxon>
        <taxon>Cyanobacteriota</taxon>
        <taxon>Cyanophyceae</taxon>
        <taxon>Oscillatoriophycideae</taxon>
        <taxon>Oscillatoriales</taxon>
        <taxon>Microcoleaceae</taxon>
        <taxon>Trichodesmium</taxon>
    </lineage>
</organism>
<proteinExistence type="inferred from homology"/>
<protein>
    <recommendedName>
        <fullName evidence="1">Chaperonin GroEL 1</fullName>
        <ecNumber evidence="1">5.6.1.7</ecNumber>
    </recommendedName>
    <alternativeName>
        <fullName evidence="1">60 kDa chaperonin 1</fullName>
    </alternativeName>
    <alternativeName>
        <fullName evidence="1">Chaperonin-60 1</fullName>
        <shortName evidence="1">Cpn60 1</shortName>
    </alternativeName>
</protein>
<name>CH601_TRIEI</name>
<evidence type="ECO:0000255" key="1">
    <source>
        <dbReference type="HAMAP-Rule" id="MF_00600"/>
    </source>
</evidence>
<dbReference type="EC" id="5.6.1.7" evidence="1"/>
<dbReference type="EMBL" id="CP000393">
    <property type="protein sequence ID" value="ABG49753.1"/>
    <property type="molecule type" value="Genomic_DNA"/>
</dbReference>
<dbReference type="RefSeq" id="WP_011610149.1">
    <property type="nucleotide sequence ID" value="NC_008312.1"/>
</dbReference>
<dbReference type="SMR" id="Q119S1"/>
<dbReference type="STRING" id="203124.Tery_0270"/>
<dbReference type="KEGG" id="ter:Tery_0270"/>
<dbReference type="eggNOG" id="COG0459">
    <property type="taxonomic scope" value="Bacteria"/>
</dbReference>
<dbReference type="HOGENOM" id="CLU_016503_3_0_3"/>
<dbReference type="OrthoDB" id="9766614at2"/>
<dbReference type="GO" id="GO:0005737">
    <property type="term" value="C:cytoplasm"/>
    <property type="evidence" value="ECO:0007669"/>
    <property type="project" value="UniProtKB-SubCell"/>
</dbReference>
<dbReference type="GO" id="GO:0005524">
    <property type="term" value="F:ATP binding"/>
    <property type="evidence" value="ECO:0007669"/>
    <property type="project" value="UniProtKB-UniRule"/>
</dbReference>
<dbReference type="GO" id="GO:0140662">
    <property type="term" value="F:ATP-dependent protein folding chaperone"/>
    <property type="evidence" value="ECO:0007669"/>
    <property type="project" value="InterPro"/>
</dbReference>
<dbReference type="GO" id="GO:0016853">
    <property type="term" value="F:isomerase activity"/>
    <property type="evidence" value="ECO:0007669"/>
    <property type="project" value="UniProtKB-KW"/>
</dbReference>
<dbReference type="GO" id="GO:0051082">
    <property type="term" value="F:unfolded protein binding"/>
    <property type="evidence" value="ECO:0007669"/>
    <property type="project" value="UniProtKB-UniRule"/>
</dbReference>
<dbReference type="GO" id="GO:0042026">
    <property type="term" value="P:protein refolding"/>
    <property type="evidence" value="ECO:0007669"/>
    <property type="project" value="UniProtKB-UniRule"/>
</dbReference>
<dbReference type="CDD" id="cd03344">
    <property type="entry name" value="GroEL"/>
    <property type="match status" value="1"/>
</dbReference>
<dbReference type="FunFam" id="3.50.7.10:FF:000001">
    <property type="entry name" value="60 kDa chaperonin"/>
    <property type="match status" value="1"/>
</dbReference>
<dbReference type="Gene3D" id="3.50.7.10">
    <property type="entry name" value="GroEL"/>
    <property type="match status" value="1"/>
</dbReference>
<dbReference type="Gene3D" id="1.10.560.10">
    <property type="entry name" value="GroEL-like equatorial domain"/>
    <property type="match status" value="1"/>
</dbReference>
<dbReference type="Gene3D" id="3.30.260.10">
    <property type="entry name" value="TCP-1-like chaperonin intermediate domain"/>
    <property type="match status" value="1"/>
</dbReference>
<dbReference type="HAMAP" id="MF_00600">
    <property type="entry name" value="CH60"/>
    <property type="match status" value="1"/>
</dbReference>
<dbReference type="InterPro" id="IPR018370">
    <property type="entry name" value="Chaperonin_Cpn60_CS"/>
</dbReference>
<dbReference type="InterPro" id="IPR001844">
    <property type="entry name" value="Cpn60/GroEL"/>
</dbReference>
<dbReference type="InterPro" id="IPR002423">
    <property type="entry name" value="Cpn60/GroEL/TCP-1"/>
</dbReference>
<dbReference type="InterPro" id="IPR027409">
    <property type="entry name" value="GroEL-like_apical_dom_sf"/>
</dbReference>
<dbReference type="InterPro" id="IPR027413">
    <property type="entry name" value="GROEL-like_equatorial_sf"/>
</dbReference>
<dbReference type="InterPro" id="IPR027410">
    <property type="entry name" value="TCP-1-like_intermed_sf"/>
</dbReference>
<dbReference type="NCBIfam" id="TIGR02348">
    <property type="entry name" value="GroEL"/>
    <property type="match status" value="1"/>
</dbReference>
<dbReference type="NCBIfam" id="NF000592">
    <property type="entry name" value="PRK00013.1"/>
    <property type="match status" value="1"/>
</dbReference>
<dbReference type="NCBIfam" id="NF009487">
    <property type="entry name" value="PRK12849.1"/>
    <property type="match status" value="1"/>
</dbReference>
<dbReference type="NCBIfam" id="NF009488">
    <property type="entry name" value="PRK12850.1"/>
    <property type="match status" value="1"/>
</dbReference>
<dbReference type="NCBIfam" id="NF009489">
    <property type="entry name" value="PRK12851.1"/>
    <property type="match status" value="1"/>
</dbReference>
<dbReference type="PANTHER" id="PTHR45633">
    <property type="entry name" value="60 KDA HEAT SHOCK PROTEIN, MITOCHONDRIAL"/>
    <property type="match status" value="1"/>
</dbReference>
<dbReference type="Pfam" id="PF00118">
    <property type="entry name" value="Cpn60_TCP1"/>
    <property type="match status" value="1"/>
</dbReference>
<dbReference type="PRINTS" id="PR00298">
    <property type="entry name" value="CHAPERONIN60"/>
</dbReference>
<dbReference type="SUPFAM" id="SSF52029">
    <property type="entry name" value="GroEL apical domain-like"/>
    <property type="match status" value="1"/>
</dbReference>
<dbReference type="SUPFAM" id="SSF48592">
    <property type="entry name" value="GroEL equatorial domain-like"/>
    <property type="match status" value="1"/>
</dbReference>
<dbReference type="SUPFAM" id="SSF54849">
    <property type="entry name" value="GroEL-intermediate domain like"/>
    <property type="match status" value="1"/>
</dbReference>
<dbReference type="PROSITE" id="PS00296">
    <property type="entry name" value="CHAPERONINS_CPN60"/>
    <property type="match status" value="1"/>
</dbReference>
<keyword id="KW-0067">ATP-binding</keyword>
<keyword id="KW-0143">Chaperone</keyword>
<keyword id="KW-0963">Cytoplasm</keyword>
<keyword id="KW-0413">Isomerase</keyword>
<keyword id="KW-0547">Nucleotide-binding</keyword>
<feature type="chain" id="PRO_0000332097" description="Chaperonin GroEL 1">
    <location>
        <begin position="1"/>
        <end position="561"/>
    </location>
</feature>
<feature type="binding site" evidence="1">
    <location>
        <begin position="29"/>
        <end position="32"/>
    </location>
    <ligand>
        <name>ATP</name>
        <dbReference type="ChEBI" id="CHEBI:30616"/>
    </ligand>
</feature>
<feature type="binding site" evidence="1">
    <location>
        <begin position="86"/>
        <end position="90"/>
    </location>
    <ligand>
        <name>ATP</name>
        <dbReference type="ChEBI" id="CHEBI:30616"/>
    </ligand>
</feature>
<feature type="binding site" evidence="1">
    <location>
        <position position="413"/>
    </location>
    <ligand>
        <name>ATP</name>
        <dbReference type="ChEBI" id="CHEBI:30616"/>
    </ligand>
</feature>
<feature type="binding site" evidence="1">
    <location>
        <position position="495"/>
    </location>
    <ligand>
        <name>ATP</name>
        <dbReference type="ChEBI" id="CHEBI:30616"/>
    </ligand>
</feature>